<accession>A0Q0P4</accession>
<organism>
    <name type="scientific">Clostridium novyi (strain NT)</name>
    <dbReference type="NCBI Taxonomy" id="386415"/>
    <lineage>
        <taxon>Bacteria</taxon>
        <taxon>Bacillati</taxon>
        <taxon>Bacillota</taxon>
        <taxon>Clostridia</taxon>
        <taxon>Eubacteriales</taxon>
        <taxon>Clostridiaceae</taxon>
        <taxon>Clostridium</taxon>
    </lineage>
</organism>
<evidence type="ECO:0000255" key="1">
    <source>
        <dbReference type="HAMAP-Rule" id="MF_00268"/>
    </source>
</evidence>
<evidence type="ECO:0000256" key="2">
    <source>
        <dbReference type="SAM" id="MobiDB-lite"/>
    </source>
</evidence>
<reference key="1">
    <citation type="journal article" date="2006" name="Nat. Biotechnol.">
        <title>The genome and transcriptomes of the anti-tumor agent Clostridium novyi-NT.</title>
        <authorList>
            <person name="Bettegowda C."/>
            <person name="Huang X."/>
            <person name="Lin J."/>
            <person name="Cheong I."/>
            <person name="Kohli M."/>
            <person name="Szabo S.A."/>
            <person name="Zhang X."/>
            <person name="Diaz L.A. Jr."/>
            <person name="Velculescu V.E."/>
            <person name="Parmigiani G."/>
            <person name="Kinzler K.W."/>
            <person name="Vogelstein B."/>
            <person name="Zhou S."/>
        </authorList>
    </citation>
    <scope>NUCLEOTIDE SEQUENCE [LARGE SCALE GENOMIC DNA]</scope>
    <source>
        <strain>NT</strain>
    </source>
</reference>
<dbReference type="EMBL" id="CP000382">
    <property type="protein sequence ID" value="ABK60427.1"/>
    <property type="molecule type" value="Genomic_DNA"/>
</dbReference>
<dbReference type="RefSeq" id="WP_011722196.1">
    <property type="nucleotide sequence ID" value="NC_008593.1"/>
</dbReference>
<dbReference type="SMR" id="A0Q0P4"/>
<dbReference type="STRING" id="386415.NT01CX_2123"/>
<dbReference type="KEGG" id="cno:NT01CX_2123"/>
<dbReference type="eggNOG" id="COG0468">
    <property type="taxonomic scope" value="Bacteria"/>
</dbReference>
<dbReference type="HOGENOM" id="CLU_040469_3_2_9"/>
<dbReference type="Proteomes" id="UP000008220">
    <property type="component" value="Chromosome"/>
</dbReference>
<dbReference type="GO" id="GO:0005829">
    <property type="term" value="C:cytosol"/>
    <property type="evidence" value="ECO:0007669"/>
    <property type="project" value="TreeGrafter"/>
</dbReference>
<dbReference type="GO" id="GO:0005524">
    <property type="term" value="F:ATP binding"/>
    <property type="evidence" value="ECO:0007669"/>
    <property type="project" value="UniProtKB-UniRule"/>
</dbReference>
<dbReference type="GO" id="GO:0016887">
    <property type="term" value="F:ATP hydrolysis activity"/>
    <property type="evidence" value="ECO:0007669"/>
    <property type="project" value="InterPro"/>
</dbReference>
<dbReference type="GO" id="GO:0140664">
    <property type="term" value="F:ATP-dependent DNA damage sensor activity"/>
    <property type="evidence" value="ECO:0007669"/>
    <property type="project" value="InterPro"/>
</dbReference>
<dbReference type="GO" id="GO:0003684">
    <property type="term" value="F:damaged DNA binding"/>
    <property type="evidence" value="ECO:0007669"/>
    <property type="project" value="UniProtKB-UniRule"/>
</dbReference>
<dbReference type="GO" id="GO:0003697">
    <property type="term" value="F:single-stranded DNA binding"/>
    <property type="evidence" value="ECO:0007669"/>
    <property type="project" value="UniProtKB-UniRule"/>
</dbReference>
<dbReference type="GO" id="GO:0006310">
    <property type="term" value="P:DNA recombination"/>
    <property type="evidence" value="ECO:0007669"/>
    <property type="project" value="UniProtKB-UniRule"/>
</dbReference>
<dbReference type="GO" id="GO:0006281">
    <property type="term" value="P:DNA repair"/>
    <property type="evidence" value="ECO:0007669"/>
    <property type="project" value="UniProtKB-UniRule"/>
</dbReference>
<dbReference type="GO" id="GO:0009432">
    <property type="term" value="P:SOS response"/>
    <property type="evidence" value="ECO:0007669"/>
    <property type="project" value="UniProtKB-UniRule"/>
</dbReference>
<dbReference type="CDD" id="cd00983">
    <property type="entry name" value="RecA"/>
    <property type="match status" value="1"/>
</dbReference>
<dbReference type="FunFam" id="3.40.50.300:FF:000087">
    <property type="entry name" value="Recombinase RecA"/>
    <property type="match status" value="1"/>
</dbReference>
<dbReference type="Gene3D" id="3.40.50.300">
    <property type="entry name" value="P-loop containing nucleotide triphosphate hydrolases"/>
    <property type="match status" value="1"/>
</dbReference>
<dbReference type="HAMAP" id="MF_00268">
    <property type="entry name" value="RecA"/>
    <property type="match status" value="1"/>
</dbReference>
<dbReference type="InterPro" id="IPR003593">
    <property type="entry name" value="AAA+_ATPase"/>
</dbReference>
<dbReference type="InterPro" id="IPR013765">
    <property type="entry name" value="DNA_recomb/repair_RecA"/>
</dbReference>
<dbReference type="InterPro" id="IPR020584">
    <property type="entry name" value="DNA_recomb/repair_RecA_CS"/>
</dbReference>
<dbReference type="InterPro" id="IPR027417">
    <property type="entry name" value="P-loop_NTPase"/>
</dbReference>
<dbReference type="InterPro" id="IPR049261">
    <property type="entry name" value="RecA-like_C"/>
</dbReference>
<dbReference type="InterPro" id="IPR049428">
    <property type="entry name" value="RecA-like_N"/>
</dbReference>
<dbReference type="InterPro" id="IPR020588">
    <property type="entry name" value="RecA_ATP-bd"/>
</dbReference>
<dbReference type="InterPro" id="IPR023400">
    <property type="entry name" value="RecA_C_sf"/>
</dbReference>
<dbReference type="InterPro" id="IPR020587">
    <property type="entry name" value="RecA_monomer-monomer_interface"/>
</dbReference>
<dbReference type="NCBIfam" id="TIGR02012">
    <property type="entry name" value="tigrfam_recA"/>
    <property type="match status" value="1"/>
</dbReference>
<dbReference type="PANTHER" id="PTHR45900:SF1">
    <property type="entry name" value="MITOCHONDRIAL DNA REPAIR PROTEIN RECA HOMOLOG-RELATED"/>
    <property type="match status" value="1"/>
</dbReference>
<dbReference type="PANTHER" id="PTHR45900">
    <property type="entry name" value="RECA"/>
    <property type="match status" value="1"/>
</dbReference>
<dbReference type="Pfam" id="PF00154">
    <property type="entry name" value="RecA"/>
    <property type="match status" value="1"/>
</dbReference>
<dbReference type="Pfam" id="PF21096">
    <property type="entry name" value="RecA_C"/>
    <property type="match status" value="1"/>
</dbReference>
<dbReference type="PRINTS" id="PR00142">
    <property type="entry name" value="RECA"/>
</dbReference>
<dbReference type="SMART" id="SM00382">
    <property type="entry name" value="AAA"/>
    <property type="match status" value="1"/>
</dbReference>
<dbReference type="SUPFAM" id="SSF52540">
    <property type="entry name" value="P-loop containing nucleoside triphosphate hydrolases"/>
    <property type="match status" value="1"/>
</dbReference>
<dbReference type="SUPFAM" id="SSF54752">
    <property type="entry name" value="RecA protein, C-terminal domain"/>
    <property type="match status" value="1"/>
</dbReference>
<dbReference type="PROSITE" id="PS00321">
    <property type="entry name" value="RECA_1"/>
    <property type="match status" value="1"/>
</dbReference>
<dbReference type="PROSITE" id="PS50162">
    <property type="entry name" value="RECA_2"/>
    <property type="match status" value="1"/>
</dbReference>
<dbReference type="PROSITE" id="PS50163">
    <property type="entry name" value="RECA_3"/>
    <property type="match status" value="1"/>
</dbReference>
<keyword id="KW-0067">ATP-binding</keyword>
<keyword id="KW-0963">Cytoplasm</keyword>
<keyword id="KW-0227">DNA damage</keyword>
<keyword id="KW-0233">DNA recombination</keyword>
<keyword id="KW-0234">DNA repair</keyword>
<keyword id="KW-0238">DNA-binding</keyword>
<keyword id="KW-0547">Nucleotide-binding</keyword>
<keyword id="KW-1185">Reference proteome</keyword>
<keyword id="KW-0742">SOS response</keyword>
<comment type="function">
    <text evidence="1">Can catalyze the hydrolysis of ATP in the presence of single-stranded DNA, the ATP-dependent uptake of single-stranded DNA by duplex DNA, and the ATP-dependent hybridization of homologous single-stranded DNAs. It interacts with LexA causing its activation and leading to its autocatalytic cleavage.</text>
</comment>
<comment type="subcellular location">
    <subcellularLocation>
        <location evidence="1">Cytoplasm</location>
    </subcellularLocation>
</comment>
<comment type="similarity">
    <text evidence="1">Belongs to the RecA family.</text>
</comment>
<feature type="chain" id="PRO_1000047902" description="Protein RecA">
    <location>
        <begin position="1"/>
        <end position="350"/>
    </location>
</feature>
<feature type="region of interest" description="Disordered" evidence="2">
    <location>
        <begin position="326"/>
        <end position="350"/>
    </location>
</feature>
<feature type="compositionally biased region" description="Basic and acidic residues" evidence="2">
    <location>
        <begin position="340"/>
        <end position="350"/>
    </location>
</feature>
<feature type="binding site" evidence="1">
    <location>
        <begin position="65"/>
        <end position="72"/>
    </location>
    <ligand>
        <name>ATP</name>
        <dbReference type="ChEBI" id="CHEBI:30616"/>
    </ligand>
</feature>
<name>RECA_CLONN</name>
<protein>
    <recommendedName>
        <fullName evidence="1">Protein RecA</fullName>
    </recommendedName>
    <alternativeName>
        <fullName evidence="1">Recombinase A</fullName>
    </alternativeName>
</protein>
<gene>
    <name evidence="1" type="primary">recA</name>
    <name type="ordered locus">NT01CX_2123</name>
</gene>
<sequence>MNNEKMKALQAAITQIEKQFGKGSVMKLGEEHVLNVEAISTGSLSLDIALGIGGIPRGRIIEIFGPESSGKTTVALHIIAEAQKSGGTAAFIDAEHALDPVYAKALGVDIDNLIVSQPDTGEQALEICEALVRSGAIDVIVVDSVAALVPKAEIEGEMGDSHVGLQARLMSQALRKLTGSINKSKCATIFINQLREKVGIMFGNPETTPGGRALKFYSSVRLDVRKIETIKQGDEFLGSRTRVKVVKNKVAPPFKQAEFDIMYGTGISFEGNVLDVGVDNEIIQKSGSWFSYNDTRLGQGRENVKQFLRENPSILLEVENKIREKHNLKTRNTADSKVTGAKDEKSKEEK</sequence>
<proteinExistence type="inferred from homology"/>